<keyword id="KW-0687">Ribonucleoprotein</keyword>
<keyword id="KW-0689">Ribosomal protein</keyword>
<proteinExistence type="inferred from homology"/>
<protein>
    <recommendedName>
        <fullName evidence="1">Small ribosomal subunit protein bS21</fullName>
    </recommendedName>
    <alternativeName>
        <fullName evidence="3">30S ribosomal protein S21</fullName>
    </alternativeName>
</protein>
<accession>Q7WHP3</accession>
<sequence length="70" mass="8535">MPIVRLKENEPFEAALRRFKRTIEKTGLLTELRSREFYEKPTAERKRKHAAAVKRHYKRIRSQQLPPRLY</sequence>
<evidence type="ECO:0000255" key="1">
    <source>
        <dbReference type="HAMAP-Rule" id="MF_00358"/>
    </source>
</evidence>
<evidence type="ECO:0000256" key="2">
    <source>
        <dbReference type="SAM" id="MobiDB-lite"/>
    </source>
</evidence>
<evidence type="ECO:0000305" key="3"/>
<name>RS21_BORBR</name>
<organism>
    <name type="scientific">Bordetella bronchiseptica (strain ATCC BAA-588 / NCTC 13252 / RB50)</name>
    <name type="common">Alcaligenes bronchisepticus</name>
    <dbReference type="NCBI Taxonomy" id="257310"/>
    <lineage>
        <taxon>Bacteria</taxon>
        <taxon>Pseudomonadati</taxon>
        <taxon>Pseudomonadota</taxon>
        <taxon>Betaproteobacteria</taxon>
        <taxon>Burkholderiales</taxon>
        <taxon>Alcaligenaceae</taxon>
        <taxon>Bordetella</taxon>
    </lineage>
</organism>
<feature type="chain" id="PRO_0000178305" description="Small ribosomal subunit protein bS21">
    <location>
        <begin position="1"/>
        <end position="70"/>
    </location>
</feature>
<feature type="region of interest" description="Disordered" evidence="2">
    <location>
        <begin position="40"/>
        <end position="70"/>
    </location>
</feature>
<feature type="compositionally biased region" description="Basic residues" evidence="2">
    <location>
        <begin position="45"/>
        <end position="61"/>
    </location>
</feature>
<comment type="similarity">
    <text evidence="1">Belongs to the bacterial ribosomal protein bS21 family.</text>
</comment>
<comment type="sequence caution" evidence="3">
    <conflict type="erroneous initiation">
        <sequence resource="EMBL-CDS" id="CAE33655"/>
    </conflict>
</comment>
<gene>
    <name evidence="1" type="primary">rpsU</name>
    <name type="ordered locus">BB3163</name>
</gene>
<reference key="1">
    <citation type="journal article" date="2003" name="Nat. Genet.">
        <title>Comparative analysis of the genome sequences of Bordetella pertussis, Bordetella parapertussis and Bordetella bronchiseptica.</title>
        <authorList>
            <person name="Parkhill J."/>
            <person name="Sebaihia M."/>
            <person name="Preston A."/>
            <person name="Murphy L.D."/>
            <person name="Thomson N.R."/>
            <person name="Harris D.E."/>
            <person name="Holden M.T.G."/>
            <person name="Churcher C.M."/>
            <person name="Bentley S.D."/>
            <person name="Mungall K.L."/>
            <person name="Cerdeno-Tarraga A.-M."/>
            <person name="Temple L."/>
            <person name="James K.D."/>
            <person name="Harris B."/>
            <person name="Quail M.A."/>
            <person name="Achtman M."/>
            <person name="Atkin R."/>
            <person name="Baker S."/>
            <person name="Basham D."/>
            <person name="Bason N."/>
            <person name="Cherevach I."/>
            <person name="Chillingworth T."/>
            <person name="Collins M."/>
            <person name="Cronin A."/>
            <person name="Davis P."/>
            <person name="Doggett J."/>
            <person name="Feltwell T."/>
            <person name="Goble A."/>
            <person name="Hamlin N."/>
            <person name="Hauser H."/>
            <person name="Holroyd S."/>
            <person name="Jagels K."/>
            <person name="Leather S."/>
            <person name="Moule S."/>
            <person name="Norberczak H."/>
            <person name="O'Neil S."/>
            <person name="Ormond D."/>
            <person name="Price C."/>
            <person name="Rabbinowitsch E."/>
            <person name="Rutter S."/>
            <person name="Sanders M."/>
            <person name="Saunders D."/>
            <person name="Seeger K."/>
            <person name="Sharp S."/>
            <person name="Simmonds M."/>
            <person name="Skelton J."/>
            <person name="Squares R."/>
            <person name="Squares S."/>
            <person name="Stevens K."/>
            <person name="Unwin L."/>
            <person name="Whitehead S."/>
            <person name="Barrell B.G."/>
            <person name="Maskell D.J."/>
        </authorList>
    </citation>
    <scope>NUCLEOTIDE SEQUENCE [LARGE SCALE GENOMIC DNA]</scope>
    <source>
        <strain>ATCC BAA-588 / NCTC 13252 / RB50</strain>
    </source>
</reference>
<dbReference type="EMBL" id="BX640446">
    <property type="protein sequence ID" value="CAE33655.1"/>
    <property type="status" value="ALT_INIT"/>
    <property type="molecule type" value="Genomic_DNA"/>
</dbReference>
<dbReference type="RefSeq" id="WP_006218592.1">
    <property type="nucleotide sequence ID" value="NC_002927.3"/>
</dbReference>
<dbReference type="SMR" id="Q7WHP3"/>
<dbReference type="GeneID" id="94357011"/>
<dbReference type="KEGG" id="bbr:BB3163"/>
<dbReference type="eggNOG" id="COG0828">
    <property type="taxonomic scope" value="Bacteria"/>
</dbReference>
<dbReference type="HOGENOM" id="CLU_159258_1_0_4"/>
<dbReference type="Proteomes" id="UP000001027">
    <property type="component" value="Chromosome"/>
</dbReference>
<dbReference type="GO" id="GO:1990904">
    <property type="term" value="C:ribonucleoprotein complex"/>
    <property type="evidence" value="ECO:0007669"/>
    <property type="project" value="UniProtKB-KW"/>
</dbReference>
<dbReference type="GO" id="GO:0005840">
    <property type="term" value="C:ribosome"/>
    <property type="evidence" value="ECO:0007669"/>
    <property type="project" value="UniProtKB-KW"/>
</dbReference>
<dbReference type="GO" id="GO:0003735">
    <property type="term" value="F:structural constituent of ribosome"/>
    <property type="evidence" value="ECO:0007669"/>
    <property type="project" value="InterPro"/>
</dbReference>
<dbReference type="GO" id="GO:0006412">
    <property type="term" value="P:translation"/>
    <property type="evidence" value="ECO:0007669"/>
    <property type="project" value="UniProtKB-UniRule"/>
</dbReference>
<dbReference type="Gene3D" id="1.20.5.1150">
    <property type="entry name" value="Ribosomal protein S8"/>
    <property type="match status" value="1"/>
</dbReference>
<dbReference type="HAMAP" id="MF_00358">
    <property type="entry name" value="Ribosomal_bS21"/>
    <property type="match status" value="1"/>
</dbReference>
<dbReference type="InterPro" id="IPR001911">
    <property type="entry name" value="Ribosomal_bS21"/>
</dbReference>
<dbReference type="InterPro" id="IPR018278">
    <property type="entry name" value="Ribosomal_bS21_CS"/>
</dbReference>
<dbReference type="InterPro" id="IPR038380">
    <property type="entry name" value="Ribosomal_bS21_sf"/>
</dbReference>
<dbReference type="NCBIfam" id="TIGR00030">
    <property type="entry name" value="S21p"/>
    <property type="match status" value="1"/>
</dbReference>
<dbReference type="PANTHER" id="PTHR21109">
    <property type="entry name" value="MITOCHONDRIAL 28S RIBOSOMAL PROTEIN S21"/>
    <property type="match status" value="1"/>
</dbReference>
<dbReference type="PANTHER" id="PTHR21109:SF22">
    <property type="entry name" value="SMALL RIBOSOMAL SUBUNIT PROTEIN BS21"/>
    <property type="match status" value="1"/>
</dbReference>
<dbReference type="Pfam" id="PF01165">
    <property type="entry name" value="Ribosomal_S21"/>
    <property type="match status" value="1"/>
</dbReference>
<dbReference type="PRINTS" id="PR00976">
    <property type="entry name" value="RIBOSOMALS21"/>
</dbReference>
<dbReference type="PROSITE" id="PS01181">
    <property type="entry name" value="RIBOSOMAL_S21"/>
    <property type="match status" value="1"/>
</dbReference>